<dbReference type="EMBL" id="CP001097">
    <property type="protein sequence ID" value="ACD91228.1"/>
    <property type="molecule type" value="Genomic_DNA"/>
</dbReference>
<dbReference type="RefSeq" id="WP_012467096.1">
    <property type="nucleotide sequence ID" value="NC_010803.1"/>
</dbReference>
<dbReference type="SMR" id="B3EGW5"/>
<dbReference type="STRING" id="290315.Clim_2204"/>
<dbReference type="KEGG" id="cli:Clim_2204"/>
<dbReference type="eggNOG" id="COG0100">
    <property type="taxonomic scope" value="Bacteria"/>
</dbReference>
<dbReference type="HOGENOM" id="CLU_072439_5_0_10"/>
<dbReference type="OrthoDB" id="9806415at2"/>
<dbReference type="Proteomes" id="UP000008841">
    <property type="component" value="Chromosome"/>
</dbReference>
<dbReference type="GO" id="GO:1990904">
    <property type="term" value="C:ribonucleoprotein complex"/>
    <property type="evidence" value="ECO:0007669"/>
    <property type="project" value="UniProtKB-KW"/>
</dbReference>
<dbReference type="GO" id="GO:0005840">
    <property type="term" value="C:ribosome"/>
    <property type="evidence" value="ECO:0007669"/>
    <property type="project" value="UniProtKB-KW"/>
</dbReference>
<dbReference type="GO" id="GO:0019843">
    <property type="term" value="F:rRNA binding"/>
    <property type="evidence" value="ECO:0007669"/>
    <property type="project" value="UniProtKB-UniRule"/>
</dbReference>
<dbReference type="GO" id="GO:0003735">
    <property type="term" value="F:structural constituent of ribosome"/>
    <property type="evidence" value="ECO:0007669"/>
    <property type="project" value="InterPro"/>
</dbReference>
<dbReference type="GO" id="GO:0006412">
    <property type="term" value="P:translation"/>
    <property type="evidence" value="ECO:0007669"/>
    <property type="project" value="UniProtKB-UniRule"/>
</dbReference>
<dbReference type="FunFam" id="3.30.420.80:FF:000004">
    <property type="entry name" value="30S ribosomal protein S11"/>
    <property type="match status" value="1"/>
</dbReference>
<dbReference type="Gene3D" id="3.30.420.80">
    <property type="entry name" value="Ribosomal protein S11"/>
    <property type="match status" value="1"/>
</dbReference>
<dbReference type="HAMAP" id="MF_01310">
    <property type="entry name" value="Ribosomal_uS11"/>
    <property type="match status" value="1"/>
</dbReference>
<dbReference type="InterPro" id="IPR001971">
    <property type="entry name" value="Ribosomal_uS11"/>
</dbReference>
<dbReference type="InterPro" id="IPR019981">
    <property type="entry name" value="Ribosomal_uS11_bac-type"/>
</dbReference>
<dbReference type="InterPro" id="IPR018102">
    <property type="entry name" value="Ribosomal_uS11_CS"/>
</dbReference>
<dbReference type="InterPro" id="IPR036967">
    <property type="entry name" value="Ribosomal_uS11_sf"/>
</dbReference>
<dbReference type="NCBIfam" id="NF003698">
    <property type="entry name" value="PRK05309.1"/>
    <property type="match status" value="1"/>
</dbReference>
<dbReference type="NCBIfam" id="TIGR03632">
    <property type="entry name" value="uS11_bact"/>
    <property type="match status" value="1"/>
</dbReference>
<dbReference type="PANTHER" id="PTHR11759">
    <property type="entry name" value="40S RIBOSOMAL PROTEIN S14/30S RIBOSOMAL PROTEIN S11"/>
    <property type="match status" value="1"/>
</dbReference>
<dbReference type="Pfam" id="PF00411">
    <property type="entry name" value="Ribosomal_S11"/>
    <property type="match status" value="1"/>
</dbReference>
<dbReference type="PIRSF" id="PIRSF002131">
    <property type="entry name" value="Ribosomal_S11"/>
    <property type="match status" value="1"/>
</dbReference>
<dbReference type="SUPFAM" id="SSF53137">
    <property type="entry name" value="Translational machinery components"/>
    <property type="match status" value="1"/>
</dbReference>
<dbReference type="PROSITE" id="PS00054">
    <property type="entry name" value="RIBOSOMAL_S11"/>
    <property type="match status" value="1"/>
</dbReference>
<keyword id="KW-0687">Ribonucleoprotein</keyword>
<keyword id="KW-0689">Ribosomal protein</keyword>
<keyword id="KW-0694">RNA-binding</keyword>
<keyword id="KW-0699">rRNA-binding</keyword>
<protein>
    <recommendedName>
        <fullName evidence="1">Small ribosomal subunit protein uS11</fullName>
    </recommendedName>
    <alternativeName>
        <fullName evidence="2">30S ribosomal protein S11</fullName>
    </alternativeName>
</protein>
<comment type="function">
    <text evidence="1">Located on the platform of the 30S subunit, it bridges several disparate RNA helices of the 16S rRNA. Forms part of the Shine-Dalgarno cleft in the 70S ribosome.</text>
</comment>
<comment type="subunit">
    <text evidence="1">Part of the 30S ribosomal subunit. Interacts with proteins S7 and S18. Binds to IF-3.</text>
</comment>
<comment type="similarity">
    <text evidence="1">Belongs to the universal ribosomal protein uS11 family.</text>
</comment>
<accession>B3EGW5</accession>
<organism>
    <name type="scientific">Chlorobium limicola (strain DSM 245 / NBRC 103803 / 6330)</name>
    <dbReference type="NCBI Taxonomy" id="290315"/>
    <lineage>
        <taxon>Bacteria</taxon>
        <taxon>Pseudomonadati</taxon>
        <taxon>Chlorobiota</taxon>
        <taxon>Chlorobiia</taxon>
        <taxon>Chlorobiales</taxon>
        <taxon>Chlorobiaceae</taxon>
        <taxon>Chlorobium/Pelodictyon group</taxon>
        <taxon>Chlorobium</taxon>
    </lineage>
</organism>
<evidence type="ECO:0000255" key="1">
    <source>
        <dbReference type="HAMAP-Rule" id="MF_01310"/>
    </source>
</evidence>
<evidence type="ECO:0000305" key="2"/>
<proteinExistence type="inferred from homology"/>
<feature type="chain" id="PRO_1000141066" description="Small ribosomal subunit protein uS11">
    <location>
        <begin position="1"/>
        <end position="127"/>
    </location>
</feature>
<name>RS11_CHLL2</name>
<reference key="1">
    <citation type="submission" date="2008-05" db="EMBL/GenBank/DDBJ databases">
        <title>Complete sequence of Chlorobium limicola DSM 245.</title>
        <authorList>
            <consortium name="US DOE Joint Genome Institute"/>
            <person name="Lucas S."/>
            <person name="Copeland A."/>
            <person name="Lapidus A."/>
            <person name="Glavina del Rio T."/>
            <person name="Dalin E."/>
            <person name="Tice H."/>
            <person name="Bruce D."/>
            <person name="Goodwin L."/>
            <person name="Pitluck S."/>
            <person name="Schmutz J."/>
            <person name="Larimer F."/>
            <person name="Land M."/>
            <person name="Hauser L."/>
            <person name="Kyrpides N."/>
            <person name="Ovchinnikova G."/>
            <person name="Zhao F."/>
            <person name="Li T."/>
            <person name="Liu Z."/>
            <person name="Overmann J."/>
            <person name="Bryant D.A."/>
            <person name="Richardson P."/>
        </authorList>
    </citation>
    <scope>NUCLEOTIDE SEQUENCE [LARGE SCALE GENOMIC DNA]</scope>
    <source>
        <strain>DSM 245 / NBRC 103803 / 6330</strain>
    </source>
</reference>
<gene>
    <name evidence="1" type="primary">rpsK</name>
    <name type="ordered locus">Clim_2204</name>
</gene>
<sequence>MATVSRKRKKVKVTPEGVVHIKASFNNVMVTITDVQGNTVSWSSAGKNGFRGSKKNTPYASQVTSEAAAKEAFDLGMRNVQVFIKGPGAGRDAAIRALQGAGLEVRSIRDITPLPHNGCRPPKRRRV</sequence>